<sequence length="739" mass="80757">MDAARDGRPERRRAVSGTYRTHPFQRPSARRSAGRPARCGRRGRGAPRVRRPRPYFQRPPDEDTSEDENVYDYIDGDSSDSADDYDSDYFTANRGPNHGAGDAMDTDAPPERAPEGGAPQDYLTAHLRAIEVLPESAPHRSLLERTARTVYAQQFPPRDLSAGSKAPAQRARRSLRGFPRGGGGGQEPGPDDEGDDAADLREDLVPDEAYAHLERDERLSEGPPLLNMEAAAAAAGERSVVEELFTYAPAQPQVEVPLPRILEGRVRPSAFFAQMSLDALCRTPPNDQRVARERRAWEMAGTPHGLLITTWSTVDPEFSIGGMYVGAPEGTRPRLVWRRAMKQAMALQYRLGVGGLCRAVDGAACRPLRRCSFWRDALLRECATAIFCRGRGARAAPRRLPRPAVGLLAATQFTPPDASPHATLFRGSMGSLIYWHELRVMLTAVPALCARYAGAGLQSAELYLLALRHSEAPGYTANERYALSAYLTLFVALAERGLRWLYLAGAHLLGPHPTAAAFREVRAKIPYERLPLGSATLHDAEVETVDSATFQEALAFSALAHVYGEAYVAVRTATTLLMAEYAVHAERRDVRQMTAAFLGVGLIAQRLMGSLNLLLNCVAGAAVYGGRRVTVREGTLARYSLLADAALPLVRPVFLVEFREARDGVMRELRLRPVASPPLAGKRRVMELYLSLDSIEALVGREPLGSRPVLGPLVDIAEALADHPHLVTGDGRGPRLGGR</sequence>
<evidence type="ECO:0000250" key="1"/>
<evidence type="ECO:0000250" key="2">
    <source>
        <dbReference type="UniProtKB" id="P10231"/>
    </source>
</evidence>
<evidence type="ECO:0000255" key="3"/>
<evidence type="ECO:0000256" key="4">
    <source>
        <dbReference type="SAM" id="MobiDB-lite"/>
    </source>
</evidence>
<evidence type="ECO:0000269" key="5">
    <source>
    </source>
</evidence>
<evidence type="ECO:0000269" key="6">
    <source>
    </source>
</evidence>
<evidence type="ECO:0000305" key="7"/>
<proteinExistence type="evidence at protein level"/>
<reference key="1">
    <citation type="journal article" date="1992" name="J. Gen. Virol.">
        <title>Characterization and transcript mapping of a bovine herpesvirus type 1 gene encoding a polypeptide homologous to the herpes simplex virus type 1 major tegument proteins VP13/14.</title>
        <authorList>
            <person name="Laboissiere S."/>
            <person name="Trudel M."/>
            <person name="Simard C."/>
        </authorList>
    </citation>
    <scope>NUCLEOTIDE SEQUENCE [GENOMIC DNA]</scope>
    <source>
        <strain>Cooper / 34</strain>
    </source>
</reference>
<reference key="2">
    <citation type="journal article" date="1996" name="Vet. Microbiol.">
        <title>Gene contents in a 31-kb segment at the left genome end of bovine herpesvirus-1.</title>
        <authorList>
            <person name="Schwyzer M."/>
            <person name="Styger D."/>
            <person name="Vogt B."/>
            <person name="Lowery D.E."/>
            <person name="Simard C."/>
            <person name="LaBoissiere S."/>
            <person name="Misra V."/>
            <person name="Vlcek C."/>
            <person name="Paces V."/>
        </authorList>
    </citation>
    <scope>NUCLEOTIDE SEQUENCE [GENOMIC DNA]</scope>
</reference>
<reference key="3">
    <citation type="submission" date="1997-09" db="EMBL/GenBank/DDBJ databases">
        <title>Complete DNA sequence of bovine herpesvirus 1.</title>
        <authorList>
            <person name="Schwyzer M."/>
            <person name="Paces V."/>
            <person name="Letchworth G.J."/>
            <person name="Misra V."/>
            <person name="Buhk H.J."/>
            <person name="Lowery D.E."/>
            <person name="Simard C."/>
            <person name="Bello L.J."/>
            <person name="Thiry E."/>
            <person name="Vlcek C."/>
        </authorList>
    </citation>
    <scope>NUCLEOTIDE SEQUENCE [LARGE SCALE GENOMIC DNA]</scope>
</reference>
<reference key="4">
    <citation type="journal article" date="2012" name="Virus Res.">
        <title>Bovine herpesvirus-1 VP8 interacts with DNA damage binding protein-1 (DDB1) and is monoubiquitinated during infection.</title>
        <authorList>
            <person name="Vasilenko N.L."/>
            <person name="Snider M."/>
            <person name="Labiuk S.L."/>
            <person name="Lobanov V.A."/>
            <person name="Babiuk L.A."/>
            <person name="van Drunen Littel-van den Hurk S."/>
        </authorList>
    </citation>
    <scope>INTERACTION WITH HOST DDB1</scope>
    <scope>FUNCTION</scope>
    <scope>SUBCELLULAR LOCATION</scope>
    <scope>UBIQUITINATION</scope>
</reference>
<reference key="5">
    <citation type="journal article" date="2015" name="Virus Res.">
        <title>Interaction of VP8 with mRNAs of bovine herpesvirus-1.</title>
        <authorList>
            <person name="Islam A."/>
            <person name="Schulz S."/>
            <person name="Afroz S."/>
            <person name="Babiuk L.A."/>
            <person name="van Drunen Littel-van den Hurk S."/>
        </authorList>
    </citation>
    <scope>FUNCTION</scope>
</reference>
<accession>P36338</accession>
<organism>
    <name type="scientific">Bovine herpesvirus 1.1 (strain Cooper)</name>
    <name type="common">BoHV-1</name>
    <name type="synonym">Infectious bovine rhinotracheitis virus</name>
    <dbReference type="NCBI Taxonomy" id="10323"/>
    <lineage>
        <taxon>Viruses</taxon>
        <taxon>Duplodnaviria</taxon>
        <taxon>Heunggongvirae</taxon>
        <taxon>Peploviricota</taxon>
        <taxon>Herviviricetes</taxon>
        <taxon>Herpesvirales</taxon>
        <taxon>Orthoherpesviridae</taxon>
        <taxon>Alphaherpesvirinae</taxon>
        <taxon>Varicellovirus</taxon>
        <taxon>Varicellovirus bovinealpha1</taxon>
    </lineage>
</organism>
<organismHost>
    <name type="scientific">Bos taurus</name>
    <name type="common">Bovine</name>
    <dbReference type="NCBI Taxonomy" id="9913"/>
</organismHost>
<gene>
    <name type="ORF">UL47</name>
</gene>
<name>TEG5_BHV1C</name>
<protein>
    <recommendedName>
        <fullName>Tegument protein UL47</fullName>
    </recommendedName>
</protein>
<dbReference type="EMBL" id="Z54206">
    <property type="protein sequence ID" value="CAA90922.1"/>
    <property type="molecule type" value="Genomic_DNA"/>
</dbReference>
<dbReference type="EMBL" id="M84469">
    <property type="protein sequence ID" value="AAA46064.1"/>
    <property type="molecule type" value="Genomic_DNA"/>
</dbReference>
<dbReference type="EMBL" id="AJ004801">
    <property type="protein sequence ID" value="CAA06087.1"/>
    <property type="molecule type" value="Genomic_DNA"/>
</dbReference>
<dbReference type="PIR" id="JQ1893">
    <property type="entry name" value="JQ1893"/>
</dbReference>
<dbReference type="RefSeq" id="NP_045312.1">
    <property type="nucleotide sequence ID" value="NC_001847.1"/>
</dbReference>
<dbReference type="Proteomes" id="UP000202075">
    <property type="component" value="Segment"/>
</dbReference>
<dbReference type="GO" id="GO:0030430">
    <property type="term" value="C:host cell cytoplasm"/>
    <property type="evidence" value="ECO:0007669"/>
    <property type="project" value="UniProtKB-SubCell"/>
</dbReference>
<dbReference type="GO" id="GO:0042025">
    <property type="term" value="C:host cell nucleus"/>
    <property type="evidence" value="ECO:0007669"/>
    <property type="project" value="UniProtKB-SubCell"/>
</dbReference>
<dbReference type="GO" id="GO:0019033">
    <property type="term" value="C:viral tegument"/>
    <property type="evidence" value="ECO:0007669"/>
    <property type="project" value="UniProtKB-SubCell"/>
</dbReference>
<dbReference type="GO" id="GO:0006355">
    <property type="term" value="P:regulation of DNA-templated transcription"/>
    <property type="evidence" value="ECO:0007669"/>
    <property type="project" value="InterPro"/>
</dbReference>
<dbReference type="InterPro" id="IPR005029">
    <property type="entry name" value="Herpes_UL47"/>
</dbReference>
<dbReference type="Pfam" id="PF03362">
    <property type="entry name" value="Herpes_UL47"/>
    <property type="match status" value="1"/>
</dbReference>
<keyword id="KW-1035">Host cytoplasm</keyword>
<keyword id="KW-1048">Host nucleus</keyword>
<keyword id="KW-0945">Host-virus interaction</keyword>
<keyword id="KW-0426">Late protein</keyword>
<keyword id="KW-0804">Transcription</keyword>
<keyword id="KW-0805">Transcription regulation</keyword>
<keyword id="KW-0832">Ubl conjugation</keyword>
<keyword id="KW-0946">Virion</keyword>
<keyword id="KW-0920">Virion tegument</keyword>
<feature type="chain" id="PRO_0000116075" description="Tegument protein UL47">
    <location>
        <begin position="1"/>
        <end position="739"/>
    </location>
</feature>
<feature type="region of interest" description="Disordered" evidence="4">
    <location>
        <begin position="1"/>
        <end position="123"/>
    </location>
</feature>
<feature type="region of interest" description="Disordered" evidence="4">
    <location>
        <begin position="154"/>
        <end position="198"/>
    </location>
</feature>
<feature type="short sequence motif" description="Nuclear localization signal" evidence="3">
    <location>
        <begin position="10"/>
        <end position="30"/>
    </location>
</feature>
<feature type="short sequence motif" description="Nuclear export signal" evidence="3">
    <location>
        <begin position="94"/>
        <end position="121"/>
    </location>
</feature>
<feature type="short sequence motif" description="Nuclear export signal" evidence="3">
    <location>
        <begin position="483"/>
        <end position="493"/>
    </location>
</feature>
<feature type="compositionally biased region" description="Basic and acidic residues" evidence="4">
    <location>
        <begin position="1"/>
        <end position="13"/>
    </location>
</feature>
<feature type="compositionally biased region" description="Basic residues" evidence="4">
    <location>
        <begin position="28"/>
        <end position="53"/>
    </location>
</feature>
<feature type="compositionally biased region" description="Acidic residues" evidence="4">
    <location>
        <begin position="62"/>
        <end position="87"/>
    </location>
</feature>
<comment type="function">
    <text evidence="2 5 6">Tegument protein that can bind to various RNA transcripts. Plays a role in the attenuation of selective viral and cellular mRNA degradation by modulating the activity of host shutoff RNase UL41/VHS. Also plays a role in the primary envelopment of virions in the perinuclear space, probably by interacting with two nuclear egress proteins UL31 and UL34.</text>
</comment>
<comment type="subunit">
    <text evidence="2 5">Interacts with US3 kinase. Interacts with UL31 and UL34; these interactions seem important for efficient virion nuclear egress. Interacts with UL41/VHS. Interacts with host DDB1.</text>
</comment>
<comment type="subcellular location">
    <subcellularLocation>
        <location evidence="2">Virion tegument</location>
    </subcellularLocation>
    <subcellularLocation>
        <location evidence="5">Host nucleus</location>
    </subcellularLocation>
    <subcellularLocation>
        <location evidence="5">Host cytoplasm</location>
    </subcellularLocation>
    <text evidence="2">Major tegument protein of the virion. Undergoes nucleocytoplasmic shuttling during infection. Localizes to the major sites of transcription in the infected cell nucleus.</text>
</comment>
<comment type="domain">
    <text evidence="2">The nuclear export signal is CRM1-dependent.</text>
</comment>
<comment type="PTM">
    <text evidence="5">Monoubiquitinated.</text>
</comment>
<comment type="PTM">
    <text evidence="2">Phosphorylated by US3. This phosphorylation is required for proper nuclear localization.</text>
</comment>
<comment type="miscellaneous">
    <text evidence="1">Expressed in late in the infection.</text>
</comment>
<comment type="similarity">
    <text evidence="7">Belongs to the alphaherpesvirinae HHV-1 UL47 family.</text>
</comment>